<accession>Q8CEC0</accession>
<accession>Q80Z13</accession>
<accession>Q8K090</accession>
<organism>
    <name type="scientific">Mus musculus</name>
    <name type="common">Mouse</name>
    <dbReference type="NCBI Taxonomy" id="10090"/>
    <lineage>
        <taxon>Eukaryota</taxon>
        <taxon>Metazoa</taxon>
        <taxon>Chordata</taxon>
        <taxon>Craniata</taxon>
        <taxon>Vertebrata</taxon>
        <taxon>Euteleostomi</taxon>
        <taxon>Mammalia</taxon>
        <taxon>Eutheria</taxon>
        <taxon>Euarchontoglires</taxon>
        <taxon>Glires</taxon>
        <taxon>Rodentia</taxon>
        <taxon>Myomorpha</taxon>
        <taxon>Muroidea</taxon>
        <taxon>Muridae</taxon>
        <taxon>Murinae</taxon>
        <taxon>Mus</taxon>
        <taxon>Mus</taxon>
    </lineage>
</organism>
<protein>
    <recommendedName>
        <fullName>Nuclear pore complex protein Nup88</fullName>
    </recommendedName>
    <alternativeName>
        <fullName>88 kDa nucleoporin</fullName>
    </alternativeName>
    <alternativeName>
        <fullName>Nucleoporin Nup88</fullName>
    </alternativeName>
</protein>
<comment type="function">
    <text evidence="1">Component of nuclear pore complex.</text>
</comment>
<comment type="subunit">
    <text evidence="1">Interacts with NUP214/CAN. Interacts with NUP62 and NUP98.</text>
</comment>
<comment type="subcellular location">
    <subcellularLocation>
        <location evidence="1">Nucleus</location>
        <location evidence="1">Nuclear pore complex</location>
    </subcellularLocation>
</comment>
<comment type="alternative products">
    <event type="alternative splicing"/>
    <isoform>
        <id>Q8CEC0-1</id>
        <name>1</name>
        <sequence type="displayed"/>
    </isoform>
    <isoform>
        <id>Q8CEC0-2</id>
        <name>2</name>
        <sequence type="described" ref="VSP_011196"/>
    </isoform>
    <isoform>
        <id>Q8CEC0-3</id>
        <name>3</name>
        <sequence type="described" ref="VSP_011195 VSP_011196"/>
    </isoform>
</comment>
<keyword id="KW-0007">Acetylation</keyword>
<keyword id="KW-0025">Alternative splicing</keyword>
<keyword id="KW-0175">Coiled coil</keyword>
<keyword id="KW-0509">mRNA transport</keyword>
<keyword id="KW-0906">Nuclear pore complex</keyword>
<keyword id="KW-0539">Nucleus</keyword>
<keyword id="KW-0597">Phosphoprotein</keyword>
<keyword id="KW-0653">Protein transport</keyword>
<keyword id="KW-1185">Reference proteome</keyword>
<keyword id="KW-0811">Translocation</keyword>
<keyword id="KW-0813">Transport</keyword>
<dbReference type="EMBL" id="AJ532593">
    <property type="protein sequence ID" value="CAD58713.1"/>
    <property type="molecule type" value="mRNA"/>
</dbReference>
<dbReference type="EMBL" id="AK028563">
    <property type="protein sequence ID" value="BAC26010.1"/>
    <property type="molecule type" value="mRNA"/>
</dbReference>
<dbReference type="EMBL" id="BC032929">
    <property type="protein sequence ID" value="AAH32929.1"/>
    <property type="molecule type" value="mRNA"/>
</dbReference>
<dbReference type="CCDS" id="CCDS36206.1">
    <molecule id="Q8CEC0-1"/>
</dbReference>
<dbReference type="CCDS" id="CCDS36207.1">
    <molecule id="Q8CEC0-3"/>
</dbReference>
<dbReference type="CCDS" id="CCDS70233.1">
    <molecule id="Q8CEC0-2"/>
</dbReference>
<dbReference type="RefSeq" id="NP_001076800.1">
    <molecule id="Q8CEC0-1"/>
    <property type="nucleotide sequence ID" value="NM_001083331.2"/>
</dbReference>
<dbReference type="RefSeq" id="NP_001263335.1">
    <molecule id="Q8CEC0-2"/>
    <property type="nucleotide sequence ID" value="NM_001276406.1"/>
</dbReference>
<dbReference type="RefSeq" id="NP_765982.2">
    <molecule id="Q8CEC0-3"/>
    <property type="nucleotide sequence ID" value="NM_172394.3"/>
</dbReference>
<dbReference type="SMR" id="Q8CEC0"/>
<dbReference type="BioGRID" id="202355">
    <property type="interactions" value="10"/>
</dbReference>
<dbReference type="ComplexPortal" id="CPX-4474">
    <property type="entry name" value="Nuclear pore complex"/>
</dbReference>
<dbReference type="FunCoup" id="Q8CEC0">
    <property type="interactions" value="4129"/>
</dbReference>
<dbReference type="IntAct" id="Q8CEC0">
    <property type="interactions" value="6"/>
</dbReference>
<dbReference type="STRING" id="10090.ENSMUSP00000048101"/>
<dbReference type="GlyGen" id="Q8CEC0">
    <property type="glycosylation" value="1 site, 1 O-linked glycan (1 site)"/>
</dbReference>
<dbReference type="iPTMnet" id="Q8CEC0"/>
<dbReference type="PhosphoSitePlus" id="Q8CEC0"/>
<dbReference type="SwissPalm" id="Q8CEC0"/>
<dbReference type="jPOST" id="Q8CEC0"/>
<dbReference type="PaxDb" id="10090-ENSMUSP00000048101"/>
<dbReference type="ProteomicsDB" id="287859">
    <molecule id="Q8CEC0-1"/>
</dbReference>
<dbReference type="ProteomicsDB" id="287860">
    <molecule id="Q8CEC0-2"/>
</dbReference>
<dbReference type="ProteomicsDB" id="287861">
    <molecule id="Q8CEC0-3"/>
</dbReference>
<dbReference type="Pumba" id="Q8CEC0"/>
<dbReference type="Antibodypedia" id="3693">
    <property type="antibodies" value="195 antibodies from 29 providers"/>
</dbReference>
<dbReference type="DNASU" id="19069"/>
<dbReference type="Ensembl" id="ENSMUST00000035283.11">
    <molecule id="Q8CEC0-1"/>
    <property type="protein sequence ID" value="ENSMUSP00000048101.5"/>
    <property type="gene ID" value="ENSMUSG00000040667.12"/>
</dbReference>
<dbReference type="Ensembl" id="ENSMUST00000108530.2">
    <molecule id="Q8CEC0-3"/>
    <property type="protein sequence ID" value="ENSMUSP00000104170.2"/>
    <property type="gene ID" value="ENSMUSG00000040667.12"/>
</dbReference>
<dbReference type="Ensembl" id="ENSMUST00000108531.8">
    <molecule id="Q8CEC0-2"/>
    <property type="protein sequence ID" value="ENSMUSP00000104171.2"/>
    <property type="gene ID" value="ENSMUSG00000040667.12"/>
</dbReference>
<dbReference type="GeneID" id="19069"/>
<dbReference type="KEGG" id="mmu:19069"/>
<dbReference type="UCSC" id="uc007jww.2">
    <molecule id="Q8CEC0-1"/>
    <property type="organism name" value="mouse"/>
</dbReference>
<dbReference type="UCSC" id="uc007jwy.2">
    <molecule id="Q8CEC0-2"/>
    <property type="organism name" value="mouse"/>
</dbReference>
<dbReference type="AGR" id="MGI:104900"/>
<dbReference type="CTD" id="4927"/>
<dbReference type="MGI" id="MGI:104900">
    <property type="gene designation" value="Nup88"/>
</dbReference>
<dbReference type="VEuPathDB" id="HostDB:ENSMUSG00000040667"/>
<dbReference type="eggNOG" id="KOG4460">
    <property type="taxonomic scope" value="Eukaryota"/>
</dbReference>
<dbReference type="GeneTree" id="ENSGT00390000015063"/>
<dbReference type="HOGENOM" id="CLU_017144_0_0_1"/>
<dbReference type="InParanoid" id="Q8CEC0"/>
<dbReference type="OMA" id="AYSCPIH"/>
<dbReference type="OrthoDB" id="341482at2759"/>
<dbReference type="PhylomeDB" id="Q8CEC0"/>
<dbReference type="TreeFam" id="TF105307"/>
<dbReference type="Reactome" id="R-MMU-159227">
    <property type="pathway name" value="Transport of the SLBP independent Mature mRNA"/>
</dbReference>
<dbReference type="Reactome" id="R-MMU-159230">
    <property type="pathway name" value="Transport of the SLBP Dependant Mature mRNA"/>
</dbReference>
<dbReference type="Reactome" id="R-MMU-159231">
    <property type="pathway name" value="Transport of Mature mRNA Derived from an Intronless Transcript"/>
</dbReference>
<dbReference type="Reactome" id="R-MMU-159236">
    <property type="pathway name" value="Transport of Mature mRNA derived from an Intron-Containing Transcript"/>
</dbReference>
<dbReference type="Reactome" id="R-MMU-170822">
    <property type="pathway name" value="Regulation of Glucokinase by Glucokinase Regulatory Protein"/>
</dbReference>
<dbReference type="Reactome" id="R-MMU-191859">
    <property type="pathway name" value="snRNP Assembly"/>
</dbReference>
<dbReference type="Reactome" id="R-MMU-3108214">
    <property type="pathway name" value="SUMOylation of DNA damage response and repair proteins"/>
</dbReference>
<dbReference type="Reactome" id="R-MMU-3232142">
    <property type="pathway name" value="SUMOylation of ubiquitinylation proteins"/>
</dbReference>
<dbReference type="Reactome" id="R-MMU-3301854">
    <property type="pathway name" value="Nuclear Pore Complex (NPC) Disassembly"/>
</dbReference>
<dbReference type="Reactome" id="R-MMU-3371453">
    <property type="pathway name" value="Regulation of HSF1-mediated heat shock response"/>
</dbReference>
<dbReference type="Reactome" id="R-MMU-4085377">
    <property type="pathway name" value="SUMOylation of SUMOylation proteins"/>
</dbReference>
<dbReference type="Reactome" id="R-MMU-4551638">
    <property type="pathway name" value="SUMOylation of chromatin organization proteins"/>
</dbReference>
<dbReference type="Reactome" id="R-MMU-4570464">
    <property type="pathway name" value="SUMOylation of RNA binding proteins"/>
</dbReference>
<dbReference type="Reactome" id="R-MMU-4615885">
    <property type="pathway name" value="SUMOylation of DNA replication proteins"/>
</dbReference>
<dbReference type="Reactome" id="R-MMU-5578749">
    <property type="pathway name" value="Transcriptional regulation by small RNAs"/>
</dbReference>
<dbReference type="BioGRID-ORCS" id="19069">
    <property type="hits" value="21 hits in 78 CRISPR screens"/>
</dbReference>
<dbReference type="ChiTaRS" id="Nup88">
    <property type="organism name" value="mouse"/>
</dbReference>
<dbReference type="PRO" id="PR:Q8CEC0"/>
<dbReference type="Proteomes" id="UP000000589">
    <property type="component" value="Chromosome 11"/>
</dbReference>
<dbReference type="RNAct" id="Q8CEC0">
    <property type="molecule type" value="protein"/>
</dbReference>
<dbReference type="Bgee" id="ENSMUSG00000040667">
    <property type="expression patterns" value="Expressed in embryonic post-anal tail and 272 other cell types or tissues"/>
</dbReference>
<dbReference type="ExpressionAtlas" id="Q8CEC0">
    <property type="expression patterns" value="baseline and differential"/>
</dbReference>
<dbReference type="GO" id="GO:0005635">
    <property type="term" value="C:nuclear envelope"/>
    <property type="evidence" value="ECO:0000266"/>
    <property type="project" value="ComplexPortal"/>
</dbReference>
<dbReference type="GO" id="GO:0005643">
    <property type="term" value="C:nuclear pore"/>
    <property type="evidence" value="ECO:0000266"/>
    <property type="project" value="MGI"/>
</dbReference>
<dbReference type="GO" id="GO:0005654">
    <property type="term" value="C:nucleoplasm"/>
    <property type="evidence" value="ECO:0007669"/>
    <property type="project" value="Ensembl"/>
</dbReference>
<dbReference type="GO" id="GO:0017056">
    <property type="term" value="F:structural constituent of nuclear pore"/>
    <property type="evidence" value="ECO:0007669"/>
    <property type="project" value="InterPro"/>
</dbReference>
<dbReference type="GO" id="GO:0051028">
    <property type="term" value="P:mRNA transport"/>
    <property type="evidence" value="ECO:0007669"/>
    <property type="project" value="UniProtKB-KW"/>
</dbReference>
<dbReference type="GO" id="GO:0006913">
    <property type="term" value="P:nucleocytoplasmic transport"/>
    <property type="evidence" value="ECO:0000303"/>
    <property type="project" value="ComplexPortal"/>
</dbReference>
<dbReference type="GO" id="GO:0015031">
    <property type="term" value="P:protein transport"/>
    <property type="evidence" value="ECO:0007669"/>
    <property type="project" value="UniProtKB-KW"/>
</dbReference>
<dbReference type="GO" id="GO:0000055">
    <property type="term" value="P:ribosomal large subunit export from nucleus"/>
    <property type="evidence" value="ECO:0007669"/>
    <property type="project" value="InterPro"/>
</dbReference>
<dbReference type="GO" id="GO:0000056">
    <property type="term" value="P:ribosomal small subunit export from nucleus"/>
    <property type="evidence" value="ECO:0007669"/>
    <property type="project" value="InterPro"/>
</dbReference>
<dbReference type="InterPro" id="IPR019321">
    <property type="entry name" value="Nucleoporin_Nup88"/>
</dbReference>
<dbReference type="InterPro" id="IPR037700">
    <property type="entry name" value="NUP88/NUP82"/>
</dbReference>
<dbReference type="PANTHER" id="PTHR13257:SF0">
    <property type="entry name" value="NUCLEAR PORE COMPLEX PROTEIN NUP88"/>
    <property type="match status" value="1"/>
</dbReference>
<dbReference type="PANTHER" id="PTHR13257">
    <property type="entry name" value="NUCLEOPORIN NUP84-RELATED"/>
    <property type="match status" value="1"/>
</dbReference>
<dbReference type="Pfam" id="PF10168">
    <property type="entry name" value="Nup88"/>
    <property type="match status" value="1"/>
</dbReference>
<name>NUP88_MOUSE</name>
<gene>
    <name type="primary">Nup88</name>
</gene>
<evidence type="ECO:0000250" key="1">
    <source>
        <dbReference type="UniProtKB" id="Q99567"/>
    </source>
</evidence>
<evidence type="ECO:0000255" key="2"/>
<evidence type="ECO:0000303" key="3">
    <source>
    </source>
</evidence>
<evidence type="ECO:0000303" key="4">
    <source ref="1"/>
</evidence>
<evidence type="ECO:0000305" key="5"/>
<evidence type="ECO:0007744" key="6">
    <source>
    </source>
</evidence>
<evidence type="ECO:0007744" key="7">
    <source>
    </source>
</evidence>
<sequence length="753" mass="84938">MAAAVGPLGDGELWQSWLPNHVVFLRLREGVRNQSPAEAEKPAASTSPSCPSLPPHLPTRNLVFGLGGELFLWDAEGSAFLVVRLRGPSGGGVEPPLSQYQRLLCINPPLFEIHQVLLSPTQHHVALIGSKGLMALELPQRWGKDSEFEGGKATVNCSTIPIAERFFTSSTSLTLKHAAWYPSEMLDPHIVLLTSDNVIRIYSLREPQTPTKVIVLSEAEEESLILNKGRAYTASLGETAVAFDFGPLVTVSKNIFEQKDRDVVAYPLYILYENGETFLTYVSLLHSPGNIGKLLGPLPMHPAAEDNYGYDACAILCLPCVPNILVIATESGMLYHCVVLEGEEEDDQTLEKSWDPRADFIPSLYVFECVELELALKLASGEDDPFASDFSCPIKLHRDPKCPSRYHCSHEAGVHSVGLTWIHKLHKFLGSDEEDKDSLQELTAEQKCFVEHILCTKPLPCRQPAPIRGFWIVPDILGPTMICITSTYECLIRPLLSTVHPASPPLLCTQEDAEVAESPLRILAETPDSFEKHIKRILQRSAANPAFLKNCSARSSEKDLAPPPEECLQLISRATQVFREQYILKQDLAKEEIQRRVKLLCDQKRKQLEDLNYCREERVSHLFRKSLREMAERLADKYEEAKEKQEDIMNRMKKVLHSFHAQLPVLSDSERDMKKELQLIPDQLRHLGNAIKQVTMKKDYQQRKMEKVLSPQKPTITLSAYQRKCIQSILKEEGEHIREMVKQINDIRNHVTF</sequence>
<proteinExistence type="evidence at protein level"/>
<reference key="1">
    <citation type="submission" date="2002-12" db="EMBL/GenBank/DDBJ databases">
        <title>Cloning and characterization of mouse nucleoporin 88kDa protein (Nup88).</title>
        <authorList>
            <person name="Takahashi N."/>
            <person name="de Hooge A.S."/>
            <person name="van de Loo F.A.J."/>
        </authorList>
    </citation>
    <scope>NUCLEOTIDE SEQUENCE [MRNA] (ISOFORM 2)</scope>
    <source>
        <strain>C57BL/6J</strain>
        <tissue>Spleen</tissue>
    </source>
</reference>
<reference key="2">
    <citation type="journal article" date="2005" name="Science">
        <title>The transcriptional landscape of the mammalian genome.</title>
        <authorList>
            <person name="Carninci P."/>
            <person name="Kasukawa T."/>
            <person name="Katayama S."/>
            <person name="Gough J."/>
            <person name="Frith M.C."/>
            <person name="Maeda N."/>
            <person name="Oyama R."/>
            <person name="Ravasi T."/>
            <person name="Lenhard B."/>
            <person name="Wells C."/>
            <person name="Kodzius R."/>
            <person name="Shimokawa K."/>
            <person name="Bajic V.B."/>
            <person name="Brenner S.E."/>
            <person name="Batalov S."/>
            <person name="Forrest A.R."/>
            <person name="Zavolan M."/>
            <person name="Davis M.J."/>
            <person name="Wilming L.G."/>
            <person name="Aidinis V."/>
            <person name="Allen J.E."/>
            <person name="Ambesi-Impiombato A."/>
            <person name="Apweiler R."/>
            <person name="Aturaliya R.N."/>
            <person name="Bailey T.L."/>
            <person name="Bansal M."/>
            <person name="Baxter L."/>
            <person name="Beisel K.W."/>
            <person name="Bersano T."/>
            <person name="Bono H."/>
            <person name="Chalk A.M."/>
            <person name="Chiu K.P."/>
            <person name="Choudhary V."/>
            <person name="Christoffels A."/>
            <person name="Clutterbuck D.R."/>
            <person name="Crowe M.L."/>
            <person name="Dalla E."/>
            <person name="Dalrymple B.P."/>
            <person name="de Bono B."/>
            <person name="Della Gatta G."/>
            <person name="di Bernardo D."/>
            <person name="Down T."/>
            <person name="Engstrom P."/>
            <person name="Fagiolini M."/>
            <person name="Faulkner G."/>
            <person name="Fletcher C.F."/>
            <person name="Fukushima T."/>
            <person name="Furuno M."/>
            <person name="Futaki S."/>
            <person name="Gariboldi M."/>
            <person name="Georgii-Hemming P."/>
            <person name="Gingeras T.R."/>
            <person name="Gojobori T."/>
            <person name="Green R.E."/>
            <person name="Gustincich S."/>
            <person name="Harbers M."/>
            <person name="Hayashi Y."/>
            <person name="Hensch T.K."/>
            <person name="Hirokawa N."/>
            <person name="Hill D."/>
            <person name="Huminiecki L."/>
            <person name="Iacono M."/>
            <person name="Ikeo K."/>
            <person name="Iwama A."/>
            <person name="Ishikawa T."/>
            <person name="Jakt M."/>
            <person name="Kanapin A."/>
            <person name="Katoh M."/>
            <person name="Kawasawa Y."/>
            <person name="Kelso J."/>
            <person name="Kitamura H."/>
            <person name="Kitano H."/>
            <person name="Kollias G."/>
            <person name="Krishnan S.P."/>
            <person name="Kruger A."/>
            <person name="Kummerfeld S.K."/>
            <person name="Kurochkin I.V."/>
            <person name="Lareau L.F."/>
            <person name="Lazarevic D."/>
            <person name="Lipovich L."/>
            <person name="Liu J."/>
            <person name="Liuni S."/>
            <person name="McWilliam S."/>
            <person name="Madan Babu M."/>
            <person name="Madera M."/>
            <person name="Marchionni L."/>
            <person name="Matsuda H."/>
            <person name="Matsuzawa S."/>
            <person name="Miki H."/>
            <person name="Mignone F."/>
            <person name="Miyake S."/>
            <person name="Morris K."/>
            <person name="Mottagui-Tabar S."/>
            <person name="Mulder N."/>
            <person name="Nakano N."/>
            <person name="Nakauchi H."/>
            <person name="Ng P."/>
            <person name="Nilsson R."/>
            <person name="Nishiguchi S."/>
            <person name="Nishikawa S."/>
            <person name="Nori F."/>
            <person name="Ohara O."/>
            <person name="Okazaki Y."/>
            <person name="Orlando V."/>
            <person name="Pang K.C."/>
            <person name="Pavan W.J."/>
            <person name="Pavesi G."/>
            <person name="Pesole G."/>
            <person name="Petrovsky N."/>
            <person name="Piazza S."/>
            <person name="Reed J."/>
            <person name="Reid J.F."/>
            <person name="Ring B.Z."/>
            <person name="Ringwald M."/>
            <person name="Rost B."/>
            <person name="Ruan Y."/>
            <person name="Salzberg S.L."/>
            <person name="Sandelin A."/>
            <person name="Schneider C."/>
            <person name="Schoenbach C."/>
            <person name="Sekiguchi K."/>
            <person name="Semple C.A."/>
            <person name="Seno S."/>
            <person name="Sessa L."/>
            <person name="Sheng Y."/>
            <person name="Shibata Y."/>
            <person name="Shimada H."/>
            <person name="Shimada K."/>
            <person name="Silva D."/>
            <person name="Sinclair B."/>
            <person name="Sperling S."/>
            <person name="Stupka E."/>
            <person name="Sugiura K."/>
            <person name="Sultana R."/>
            <person name="Takenaka Y."/>
            <person name="Taki K."/>
            <person name="Tammoja K."/>
            <person name="Tan S.L."/>
            <person name="Tang S."/>
            <person name="Taylor M.S."/>
            <person name="Tegner J."/>
            <person name="Teichmann S.A."/>
            <person name="Ueda H.R."/>
            <person name="van Nimwegen E."/>
            <person name="Verardo R."/>
            <person name="Wei C.L."/>
            <person name="Yagi K."/>
            <person name="Yamanishi H."/>
            <person name="Zabarovsky E."/>
            <person name="Zhu S."/>
            <person name="Zimmer A."/>
            <person name="Hide W."/>
            <person name="Bult C."/>
            <person name="Grimmond S.M."/>
            <person name="Teasdale R.D."/>
            <person name="Liu E.T."/>
            <person name="Brusic V."/>
            <person name="Quackenbush J."/>
            <person name="Wahlestedt C."/>
            <person name="Mattick J.S."/>
            <person name="Hume D.A."/>
            <person name="Kai C."/>
            <person name="Sasaki D."/>
            <person name="Tomaru Y."/>
            <person name="Fukuda S."/>
            <person name="Kanamori-Katayama M."/>
            <person name="Suzuki M."/>
            <person name="Aoki J."/>
            <person name="Arakawa T."/>
            <person name="Iida J."/>
            <person name="Imamura K."/>
            <person name="Itoh M."/>
            <person name="Kato T."/>
            <person name="Kawaji H."/>
            <person name="Kawagashira N."/>
            <person name="Kawashima T."/>
            <person name="Kojima M."/>
            <person name="Kondo S."/>
            <person name="Konno H."/>
            <person name="Nakano K."/>
            <person name="Ninomiya N."/>
            <person name="Nishio T."/>
            <person name="Okada M."/>
            <person name="Plessy C."/>
            <person name="Shibata K."/>
            <person name="Shiraki T."/>
            <person name="Suzuki S."/>
            <person name="Tagami M."/>
            <person name="Waki K."/>
            <person name="Watahiki A."/>
            <person name="Okamura-Oho Y."/>
            <person name="Suzuki H."/>
            <person name="Kawai J."/>
            <person name="Hayashizaki Y."/>
        </authorList>
    </citation>
    <scope>NUCLEOTIDE SEQUENCE [LARGE SCALE MRNA] (ISOFORM 1)</scope>
    <source>
        <strain>C57BL/6J</strain>
        <tissue>Skin</tissue>
    </source>
</reference>
<reference key="3">
    <citation type="journal article" date="2004" name="Genome Res.">
        <title>The status, quality, and expansion of the NIH full-length cDNA project: the Mammalian Gene Collection (MGC).</title>
        <authorList>
            <consortium name="The MGC Project Team"/>
        </authorList>
    </citation>
    <scope>NUCLEOTIDE SEQUENCE [LARGE SCALE MRNA] (ISOFORM 3)</scope>
    <source>
        <strain>C57BL/6J</strain>
        <tissue>Thymus</tissue>
    </source>
</reference>
<reference key="4">
    <citation type="journal article" date="2007" name="Proc. Natl. Acad. Sci. U.S.A.">
        <title>Large-scale phosphorylation analysis of mouse liver.</title>
        <authorList>
            <person name="Villen J."/>
            <person name="Beausoleil S.A."/>
            <person name="Gerber S.A."/>
            <person name="Gygi S.P."/>
        </authorList>
    </citation>
    <scope>PHOSPHORYLATION [LARGE SCALE ANALYSIS] AT SER-710</scope>
    <scope>IDENTIFICATION BY MASS SPECTROMETRY [LARGE SCALE ANALYSIS]</scope>
    <source>
        <tissue>Liver</tissue>
    </source>
</reference>
<reference key="5">
    <citation type="journal article" date="2009" name="Immunity">
        <title>The phagosomal proteome in interferon-gamma-activated macrophages.</title>
        <authorList>
            <person name="Trost M."/>
            <person name="English L."/>
            <person name="Lemieux S."/>
            <person name="Courcelles M."/>
            <person name="Desjardins M."/>
            <person name="Thibault P."/>
        </authorList>
    </citation>
    <scope>IDENTIFICATION BY MASS SPECTROMETRY [LARGE SCALE ANALYSIS]</scope>
</reference>
<reference key="6">
    <citation type="journal article" date="2010" name="Cell">
        <title>A tissue-specific atlas of mouse protein phosphorylation and expression.</title>
        <authorList>
            <person name="Huttlin E.L."/>
            <person name="Jedrychowski M.P."/>
            <person name="Elias J.E."/>
            <person name="Goswami T."/>
            <person name="Rad R."/>
            <person name="Beausoleil S.A."/>
            <person name="Villen J."/>
            <person name="Haas W."/>
            <person name="Sowa M.E."/>
            <person name="Gygi S.P."/>
        </authorList>
    </citation>
    <scope>PHOSPHORYLATION [LARGE SCALE ANALYSIS] AT SER-35 AND THR-526</scope>
    <scope>IDENTIFICATION BY MASS SPECTROMETRY [LARGE SCALE ANALYSIS]</scope>
    <source>
        <tissue>Kidney</tissue>
        <tissue>Lung</tissue>
        <tissue>Spleen</tissue>
        <tissue>Testis</tissue>
    </source>
</reference>
<feature type="initiator methionine" description="Removed" evidence="1">
    <location>
        <position position="1"/>
    </location>
</feature>
<feature type="chain" id="PRO_0000204888" description="Nuclear pore complex protein Nup88">
    <location>
        <begin position="2"/>
        <end position="753"/>
    </location>
</feature>
<feature type="coiled-coil region" evidence="2">
    <location>
        <begin position="623"/>
        <end position="663"/>
    </location>
</feature>
<feature type="modified residue" description="N-acetylalanine" evidence="1">
    <location>
        <position position="2"/>
    </location>
</feature>
<feature type="modified residue" description="Phosphoserine" evidence="7">
    <location>
        <position position="35"/>
    </location>
</feature>
<feature type="modified residue" description="Phosphoserine" evidence="1">
    <location>
        <position position="380"/>
    </location>
</feature>
<feature type="modified residue" description="Phosphoserine" evidence="1">
    <location>
        <position position="438"/>
    </location>
</feature>
<feature type="modified residue" description="Phosphoserine" evidence="1">
    <location>
        <position position="518"/>
    </location>
</feature>
<feature type="modified residue" description="Phosphothreonine" evidence="7">
    <location>
        <position position="526"/>
    </location>
</feature>
<feature type="modified residue" description="Phosphoserine" evidence="1">
    <location>
        <position position="541"/>
    </location>
</feature>
<feature type="modified residue" description="Phosphoserine" evidence="6">
    <location>
        <position position="710"/>
    </location>
</feature>
<feature type="splice variant" id="VSP_011195" description="In isoform 3." evidence="3">
    <location>
        <begin position="550"/>
        <end position="554"/>
    </location>
</feature>
<feature type="splice variant" id="VSP_011196" description="In isoform 2 and isoform 3." evidence="3 4">
    <location>
        <begin position="618"/>
        <end position="623"/>
    </location>
</feature>
<feature type="sequence conflict" description="In Ref. 1; CAD58713." evidence="5" ref="1">
    <original>Q</original>
    <variation>H</variation>
    <location>
        <position position="34"/>
    </location>
</feature>
<feature type="sequence conflict" description="In Ref. 1; CAD58713." evidence="5" ref="1">
    <original>E</original>
    <variation>D</variation>
    <location>
        <position position="40"/>
    </location>
</feature>
<feature type="sequence conflict" description="In Ref. 1; CAD58713." evidence="5" ref="1">
    <original>R</original>
    <variation>P</variation>
    <location>
        <position position="86"/>
    </location>
</feature>
<feature type="sequence conflict" description="In Ref. 1; CAD58713." evidence="5" ref="1">
    <original>H</original>
    <variation>D</variation>
    <location>
        <position position="397"/>
    </location>
</feature>